<protein>
    <recommendedName>
        <fullName evidence="5">MFS-type transporter penM</fullName>
    </recommendedName>
</protein>
<feature type="chain" id="PRO_0000455151" description="MFS-type transporter penM">
    <location>
        <begin position="1"/>
        <end position="508"/>
    </location>
</feature>
<feature type="transmembrane region" description="Helical" evidence="1">
    <location>
        <begin position="73"/>
        <end position="93"/>
    </location>
</feature>
<feature type="transmembrane region" description="Helical" evidence="1">
    <location>
        <begin position="108"/>
        <end position="128"/>
    </location>
</feature>
<feature type="transmembrane region" description="Helical" evidence="1">
    <location>
        <begin position="143"/>
        <end position="163"/>
    </location>
</feature>
<feature type="transmembrane region" description="Helical" evidence="1">
    <location>
        <begin position="166"/>
        <end position="186"/>
    </location>
</feature>
<feature type="transmembrane region" description="Helical" evidence="1">
    <location>
        <begin position="197"/>
        <end position="217"/>
    </location>
</feature>
<feature type="transmembrane region" description="Helical" evidence="1">
    <location>
        <begin position="225"/>
        <end position="245"/>
    </location>
</feature>
<feature type="transmembrane region" description="Helical" evidence="1">
    <location>
        <begin position="299"/>
        <end position="319"/>
    </location>
</feature>
<feature type="transmembrane region" description="Helical" evidence="1">
    <location>
        <begin position="335"/>
        <end position="355"/>
    </location>
</feature>
<feature type="transmembrane region" description="Helical" evidence="1">
    <location>
        <begin position="379"/>
        <end position="399"/>
    </location>
</feature>
<feature type="transmembrane region" description="Helical" evidence="1">
    <location>
        <begin position="407"/>
        <end position="427"/>
    </location>
</feature>
<feature type="transmembrane region" description="Helical" evidence="1">
    <location>
        <begin position="435"/>
        <end position="457"/>
    </location>
</feature>
<feature type="transmembrane region" description="Helical" evidence="1">
    <location>
        <begin position="475"/>
        <end position="495"/>
    </location>
</feature>
<feature type="region of interest" description="Disordered" evidence="3">
    <location>
        <begin position="1"/>
        <end position="60"/>
    </location>
</feature>
<feature type="short sequence motif" description="Peroxisomal targeting signal" evidence="7">
    <location>
        <begin position="293"/>
        <end position="307"/>
    </location>
</feature>
<feature type="compositionally biased region" description="Basic and acidic residues" evidence="3">
    <location>
        <begin position="35"/>
        <end position="46"/>
    </location>
</feature>
<feature type="glycosylation site" description="N-linked (GlcNAc...) asparagine" evidence="2">
    <location>
        <position position="61"/>
    </location>
</feature>
<feature type="glycosylation site" description="N-linked (GlcNAc...) asparagine" evidence="2">
    <location>
        <position position="100"/>
    </location>
</feature>
<feature type="glycosylation site" description="N-linked (GlcNAc...) asparagine" evidence="2">
    <location>
        <position position="331"/>
    </location>
</feature>
<reference key="1">
    <citation type="journal article" date="2008" name="Nat. Biotechnol.">
        <title>Genome sequencing and analysis of the filamentous fungus Penicillium chrysogenum.</title>
        <authorList>
            <person name="van den Berg M.A."/>
            <person name="Albang R."/>
            <person name="Albermann K."/>
            <person name="Badger J.H."/>
            <person name="Daran J.-M."/>
            <person name="Driessen A.J.M."/>
            <person name="Garcia-Estrada C."/>
            <person name="Fedorova N.D."/>
            <person name="Harris D.M."/>
            <person name="Heijne W.H.M."/>
            <person name="Joardar V.S."/>
            <person name="Kiel J.A.K.W."/>
            <person name="Kovalchuk A."/>
            <person name="Martin J.F."/>
            <person name="Nierman W.C."/>
            <person name="Nijland J.G."/>
            <person name="Pronk J.T."/>
            <person name="Roubos J.A."/>
            <person name="van der Klei I.J."/>
            <person name="van Peij N.N.M.E."/>
            <person name="Veenhuis M."/>
            <person name="von Doehren H."/>
            <person name="Wagner C."/>
            <person name="Wortman J.R."/>
            <person name="Bovenberg R.A.L."/>
        </authorList>
    </citation>
    <scope>NUCLEOTIDE SEQUENCE [LARGE SCALE GENOMIC DNA]</scope>
    <source>
        <strain>ATCC 28089 / DSM 1075 / NRRL 1951 / Wisconsin 54-1255</strain>
    </source>
</reference>
<reference key="2">
    <citation type="journal article" date="2014" name="Metab. Eng.">
        <title>New insights into the isopenicillin N transport in Penicillium chrysogenum.</title>
        <authorList>
            <person name="Fernandez-Aguado M."/>
            <person name="Martin J.F."/>
            <person name="Rodriguez-Castro R."/>
            <person name="Garcia-Estrada C."/>
            <person name="Albillos S.M."/>
            <person name="Teijeira F."/>
            <person name="Ullan R.V."/>
        </authorList>
    </citation>
    <scope>FUNCTION</scope>
    <scope>DISRUPTION PHENOTYPE</scope>
    <scope>DOMAIN</scope>
    <scope>SUBCELLULAR LOCATION</scope>
</reference>
<accession>B6HN82</accession>
<name>PENM_PENRW</name>
<gene>
    <name evidence="5" type="primary">penM</name>
    <name type="ORF">Pc21g09220</name>
</gene>
<sequence>MKDGEETPSVDGSTSASNREKLGTDLEIGPVDLSDGGKEEKVKDPNLVDWDGPDDPENPLNWTSKRKITATCSIALITFLTPLGSSMFAPGVGQLVKDFNVTSTELSSFVVSVYLLGYCFGPLIIAPLSELYGRQYVYHVCNILYVIWTIACAFAPEIGSLVVFRFFAGLAGSCPLTIGAGSIADMFVQEQRGGAMAAWALGPLIGPVVGPVAGAYLAQAKGWRWSFYVLAMAAGAITISSLFSIRESYAPTLLARKTKKLQKETGNMNLRSALDTGRTPKELFLYSIVRPTKMLFRSPIVFLLSLYVGVIYGYLYLLFTTITSVFQQQYNFSQGAVGLTYLGLGVGSLIGLFLIGATSDRLLNYLAAKNGEKKPEYRLPPMVPGAIFVPISLFMYGWTAYYQTHWIVPIIGTSFLGTGMMITFMCVSTYLVDAFTNYAASVMAANTVFRSLAGALLPLAGPKMYAVLGLGWGNSLLGFIALAFCALPVIFWIYGERIRTSPKFQVTF</sequence>
<keyword id="KW-0325">Glycoprotein</keyword>
<keyword id="KW-0472">Membrane</keyword>
<keyword id="KW-0576">Peroxisome</keyword>
<keyword id="KW-1185">Reference proteome</keyword>
<keyword id="KW-0812">Transmembrane</keyword>
<keyword id="KW-1133">Transmembrane helix</keyword>
<keyword id="KW-0813">Transport</keyword>
<organism>
    <name type="scientific">Penicillium rubens (strain ATCC 28089 / DSM 1075 / NRRL 1951 / Wisconsin 54-1255)</name>
    <name type="common">Penicillium chrysogenum</name>
    <dbReference type="NCBI Taxonomy" id="500485"/>
    <lineage>
        <taxon>Eukaryota</taxon>
        <taxon>Fungi</taxon>
        <taxon>Dikarya</taxon>
        <taxon>Ascomycota</taxon>
        <taxon>Pezizomycotina</taxon>
        <taxon>Eurotiomycetes</taxon>
        <taxon>Eurotiomycetidae</taxon>
        <taxon>Eurotiales</taxon>
        <taxon>Aspergillaceae</taxon>
        <taxon>Penicillium</taxon>
        <taxon>Penicillium chrysogenum species complex</taxon>
    </lineage>
</organism>
<dbReference type="EMBL" id="AM920436">
    <property type="protein sequence ID" value="CAP95819.1"/>
    <property type="molecule type" value="Genomic_DNA"/>
</dbReference>
<dbReference type="RefSeq" id="XP_002567961.1">
    <property type="nucleotide sequence ID" value="XM_002567915.1"/>
</dbReference>
<dbReference type="SMR" id="B6HN82"/>
<dbReference type="TCDB" id="2.A.1.2.86">
    <property type="family name" value="the major facilitator superfamily (mfs)"/>
</dbReference>
<dbReference type="GlyCosmos" id="B6HN82">
    <property type="glycosylation" value="3 sites, No reported glycans"/>
</dbReference>
<dbReference type="GeneID" id="8304087"/>
<dbReference type="KEGG" id="pcs:N7525_007512"/>
<dbReference type="VEuPathDB" id="FungiDB:PCH_Pc21g09220"/>
<dbReference type="eggNOG" id="KOG0255">
    <property type="taxonomic scope" value="Eukaryota"/>
</dbReference>
<dbReference type="HOGENOM" id="CLU_008455_1_1_1"/>
<dbReference type="OMA" id="AMCACPL"/>
<dbReference type="OrthoDB" id="5296287at2759"/>
<dbReference type="BioCyc" id="PCHR:PC21G09220-MONOMER"/>
<dbReference type="Proteomes" id="UP000000724">
    <property type="component" value="Contig Pc00c21"/>
</dbReference>
<dbReference type="GO" id="GO:0005778">
    <property type="term" value="C:peroxisomal membrane"/>
    <property type="evidence" value="ECO:0007669"/>
    <property type="project" value="UniProtKB-SubCell"/>
</dbReference>
<dbReference type="GO" id="GO:0022857">
    <property type="term" value="F:transmembrane transporter activity"/>
    <property type="evidence" value="ECO:0007669"/>
    <property type="project" value="InterPro"/>
</dbReference>
<dbReference type="CDD" id="cd17323">
    <property type="entry name" value="MFS_Tpo1_MDR_like"/>
    <property type="match status" value="1"/>
</dbReference>
<dbReference type="FunFam" id="1.20.1250.20:FF:000011">
    <property type="entry name" value="MFS multidrug transporter, putative"/>
    <property type="match status" value="1"/>
</dbReference>
<dbReference type="Gene3D" id="1.20.1250.20">
    <property type="entry name" value="MFS general substrate transporter like domains"/>
    <property type="match status" value="1"/>
</dbReference>
<dbReference type="InterPro" id="IPR011701">
    <property type="entry name" value="MFS"/>
</dbReference>
<dbReference type="InterPro" id="IPR020846">
    <property type="entry name" value="MFS_dom"/>
</dbReference>
<dbReference type="InterPro" id="IPR036259">
    <property type="entry name" value="MFS_trans_sf"/>
</dbReference>
<dbReference type="PANTHER" id="PTHR23502">
    <property type="entry name" value="MAJOR FACILITATOR SUPERFAMILY"/>
    <property type="match status" value="1"/>
</dbReference>
<dbReference type="PANTHER" id="PTHR23502:SF68">
    <property type="entry name" value="MULTIDRUG TRANSPORTER, PUTATIVE (AFU_ORTHOLOGUE AFUA_3G01120)-RELATED"/>
    <property type="match status" value="1"/>
</dbReference>
<dbReference type="Pfam" id="PF07690">
    <property type="entry name" value="MFS_1"/>
    <property type="match status" value="1"/>
</dbReference>
<dbReference type="SUPFAM" id="SSF103473">
    <property type="entry name" value="MFS general substrate transporter"/>
    <property type="match status" value="1"/>
</dbReference>
<dbReference type="PROSITE" id="PS50850">
    <property type="entry name" value="MFS"/>
    <property type="match status" value="1"/>
</dbReference>
<comment type="function">
    <text evidence="4">MFS-type transporter involved in penicillin production, most likely through the translocation of isopenicillin N from the cytosol to the peroxisomal lumen across the peroxisomal membrane.</text>
</comment>
<comment type="subcellular location">
    <subcellularLocation>
        <location evidence="4">Peroxisome membrane</location>
        <topology evidence="1">Multi-pass membrane protein</topology>
    </subcellularLocation>
    <text evidence="7">Probably recruited to the peroxisomal membrane by pex19.</text>
</comment>
<comment type="domain">
    <text evidence="7">The peroxisomal targeting signal allows recruitment to the peroxisomal membrane by pex19.</text>
</comment>
<comment type="disruption phenotype">
    <text evidence="4">Leads to a decrease in benzylpenicillin production.</text>
</comment>
<comment type="similarity">
    <text evidence="6">Belongs to the major facilitator superfamily.</text>
</comment>
<evidence type="ECO:0000255" key="1"/>
<evidence type="ECO:0000255" key="2">
    <source>
        <dbReference type="PROSITE-ProRule" id="PRU00498"/>
    </source>
</evidence>
<evidence type="ECO:0000256" key="3">
    <source>
        <dbReference type="SAM" id="MobiDB-lite"/>
    </source>
</evidence>
<evidence type="ECO:0000269" key="4">
    <source>
    </source>
</evidence>
<evidence type="ECO:0000303" key="5">
    <source>
    </source>
</evidence>
<evidence type="ECO:0000305" key="6"/>
<evidence type="ECO:0000305" key="7">
    <source>
    </source>
</evidence>
<proteinExistence type="inferred from homology"/>